<feature type="chain" id="PRO_0000167043" description="Nicotinate-nucleotide--dimethylbenzimidazole phosphoribosyltransferase">
    <location>
        <begin position="1"/>
        <end position="361"/>
    </location>
</feature>
<feature type="active site" description="Proton acceptor" evidence="1">
    <location>
        <position position="315"/>
    </location>
</feature>
<evidence type="ECO:0000255" key="1">
    <source>
        <dbReference type="HAMAP-Rule" id="MF_00230"/>
    </source>
</evidence>
<accession>Q8XLK7</accession>
<comment type="function">
    <text evidence="1">Catalyzes the synthesis of alpha-ribazole-5'-phosphate from nicotinate mononucleotide (NAMN) and 5,6-dimethylbenzimidazole (DMB).</text>
</comment>
<comment type="catalytic activity">
    <reaction evidence="1">
        <text>5,6-dimethylbenzimidazole + nicotinate beta-D-ribonucleotide = alpha-ribazole 5'-phosphate + nicotinate + H(+)</text>
        <dbReference type="Rhea" id="RHEA:11196"/>
        <dbReference type="ChEBI" id="CHEBI:15378"/>
        <dbReference type="ChEBI" id="CHEBI:15890"/>
        <dbReference type="ChEBI" id="CHEBI:32544"/>
        <dbReference type="ChEBI" id="CHEBI:57502"/>
        <dbReference type="ChEBI" id="CHEBI:57918"/>
        <dbReference type="EC" id="2.4.2.21"/>
    </reaction>
</comment>
<comment type="pathway">
    <text evidence="1">Nucleoside biosynthesis; alpha-ribazole biosynthesis; alpha-ribazole from 5,6-dimethylbenzimidazole: step 1/2.</text>
</comment>
<comment type="similarity">
    <text evidence="1">Belongs to the CobT family.</text>
</comment>
<sequence length="361" mass="38887">MLNEVLKGIEGLDNDMIVKAKNRVDSLAKPLGSLGKLEDIAIRLSGITGNMFNNIDKKCVIIMSSDNGVEEEGVASAPQCVTLLQTKNFIKGTTGVATLAKANGTDLMVFDVGINSDEVVEGVINRKISKGTKNIYKEPAMTYEEAKKSLEIGIEAVKIAKEKGYKILGVGEMGIGNTTTSAAVLKALIGCETSQVVGKGGGINNDSFEKKKRIVEEVVKKHNINFDDSIDIISKVGGYDIGAMTGVFLGAAFYRIPVVIDGFISVVTALLANRLNPLVKEFCFTSHKSQEIGYELAIKELGLDPMLDLNMRLGEGSGCPIAFSVIDFATAMMNNMATFEEGNIDNSYLEDVKDEECYIVL</sequence>
<proteinExistence type="inferred from homology"/>
<dbReference type="EC" id="2.4.2.21" evidence="1"/>
<dbReference type="EMBL" id="BA000016">
    <property type="protein sequence ID" value="BAB80740.1"/>
    <property type="molecule type" value="Genomic_DNA"/>
</dbReference>
<dbReference type="RefSeq" id="WP_011010190.1">
    <property type="nucleotide sequence ID" value="NC_003366.1"/>
</dbReference>
<dbReference type="SMR" id="Q8XLK7"/>
<dbReference type="STRING" id="195102.gene:10490297"/>
<dbReference type="KEGG" id="cpe:CPE1034"/>
<dbReference type="HOGENOM" id="CLU_002982_0_0_9"/>
<dbReference type="UniPathway" id="UPA00061">
    <property type="reaction ID" value="UER00516"/>
</dbReference>
<dbReference type="Proteomes" id="UP000000818">
    <property type="component" value="Chromosome"/>
</dbReference>
<dbReference type="GO" id="GO:0008939">
    <property type="term" value="F:nicotinate-nucleotide-dimethylbenzimidazole phosphoribosyltransferase activity"/>
    <property type="evidence" value="ECO:0007669"/>
    <property type="project" value="UniProtKB-UniRule"/>
</dbReference>
<dbReference type="GO" id="GO:0009236">
    <property type="term" value="P:cobalamin biosynthetic process"/>
    <property type="evidence" value="ECO:0007669"/>
    <property type="project" value="UniProtKB-KW"/>
</dbReference>
<dbReference type="CDD" id="cd02439">
    <property type="entry name" value="DMB-PRT_CobT"/>
    <property type="match status" value="1"/>
</dbReference>
<dbReference type="FunFam" id="3.40.50.10210:FF:000001">
    <property type="entry name" value="Nicotinate-nucleotide--dimethylbenzimidazole phosphoribosyltransferase"/>
    <property type="match status" value="1"/>
</dbReference>
<dbReference type="Gene3D" id="1.10.1610.10">
    <property type="match status" value="1"/>
</dbReference>
<dbReference type="Gene3D" id="3.40.50.10210">
    <property type="match status" value="1"/>
</dbReference>
<dbReference type="HAMAP" id="MF_00230">
    <property type="entry name" value="CobT"/>
    <property type="match status" value="1"/>
</dbReference>
<dbReference type="InterPro" id="IPR003200">
    <property type="entry name" value="Nict_dMeBzImd_PRibTrfase"/>
</dbReference>
<dbReference type="InterPro" id="IPR017846">
    <property type="entry name" value="Nict_dMeBzImd_PRibTrfase_bact"/>
</dbReference>
<dbReference type="InterPro" id="IPR023195">
    <property type="entry name" value="Nict_dMeBzImd_PRibTrfase_N"/>
</dbReference>
<dbReference type="InterPro" id="IPR036087">
    <property type="entry name" value="Nict_dMeBzImd_PRibTrfase_sf"/>
</dbReference>
<dbReference type="NCBIfam" id="TIGR03160">
    <property type="entry name" value="cobT_DBIPRT"/>
    <property type="match status" value="1"/>
</dbReference>
<dbReference type="NCBIfam" id="NF000996">
    <property type="entry name" value="PRK00105.1"/>
    <property type="match status" value="1"/>
</dbReference>
<dbReference type="PANTHER" id="PTHR43463">
    <property type="entry name" value="NICOTINATE-NUCLEOTIDE--DIMETHYLBENZIMIDAZOLE PHOSPHORIBOSYLTRANSFERASE"/>
    <property type="match status" value="1"/>
</dbReference>
<dbReference type="PANTHER" id="PTHR43463:SF1">
    <property type="entry name" value="NICOTINATE-NUCLEOTIDE--DIMETHYLBENZIMIDAZOLE PHOSPHORIBOSYLTRANSFERASE"/>
    <property type="match status" value="1"/>
</dbReference>
<dbReference type="Pfam" id="PF02277">
    <property type="entry name" value="DBI_PRT"/>
    <property type="match status" value="1"/>
</dbReference>
<dbReference type="SUPFAM" id="SSF52733">
    <property type="entry name" value="Nicotinate mononucleotide:5,6-dimethylbenzimidazole phosphoribosyltransferase (CobT)"/>
    <property type="match status" value="1"/>
</dbReference>
<keyword id="KW-0169">Cobalamin biosynthesis</keyword>
<keyword id="KW-0328">Glycosyltransferase</keyword>
<keyword id="KW-1185">Reference proteome</keyword>
<keyword id="KW-0808">Transferase</keyword>
<protein>
    <recommendedName>
        <fullName evidence="1">Nicotinate-nucleotide--dimethylbenzimidazole phosphoribosyltransferase</fullName>
        <shortName evidence="1">NN:DBI PRT</shortName>
        <ecNumber evidence="1">2.4.2.21</ecNumber>
    </recommendedName>
    <alternativeName>
        <fullName evidence="1">N(1)-alpha-phosphoribosyltransferase</fullName>
    </alternativeName>
</protein>
<name>COBT_CLOPE</name>
<organism>
    <name type="scientific">Clostridium perfringens (strain 13 / Type A)</name>
    <dbReference type="NCBI Taxonomy" id="195102"/>
    <lineage>
        <taxon>Bacteria</taxon>
        <taxon>Bacillati</taxon>
        <taxon>Bacillota</taxon>
        <taxon>Clostridia</taxon>
        <taxon>Eubacteriales</taxon>
        <taxon>Clostridiaceae</taxon>
        <taxon>Clostridium</taxon>
    </lineage>
</organism>
<reference key="1">
    <citation type="journal article" date="2002" name="Proc. Natl. Acad. Sci. U.S.A.">
        <title>Complete genome sequence of Clostridium perfringens, an anaerobic flesh-eater.</title>
        <authorList>
            <person name="Shimizu T."/>
            <person name="Ohtani K."/>
            <person name="Hirakawa H."/>
            <person name="Ohshima K."/>
            <person name="Yamashita A."/>
            <person name="Shiba T."/>
            <person name="Ogasawara N."/>
            <person name="Hattori M."/>
            <person name="Kuhara S."/>
            <person name="Hayashi H."/>
        </authorList>
    </citation>
    <scope>NUCLEOTIDE SEQUENCE [LARGE SCALE GENOMIC DNA]</scope>
    <source>
        <strain>13 / Type A</strain>
    </source>
</reference>
<gene>
    <name evidence="1" type="primary">cobT</name>
    <name type="ordered locus">CPE1034</name>
</gene>